<feature type="chain" id="PRO_0000287745" description="ATP synthase subunit a">
    <location>
        <begin position="1"/>
        <end position="289"/>
    </location>
</feature>
<feature type="transmembrane region" description="Helical" evidence="1">
    <location>
        <begin position="43"/>
        <end position="63"/>
    </location>
</feature>
<feature type="transmembrane region" description="Helical" evidence="1">
    <location>
        <begin position="104"/>
        <end position="124"/>
    </location>
</feature>
<feature type="transmembrane region" description="Helical" evidence="1">
    <location>
        <begin position="160"/>
        <end position="180"/>
    </location>
</feature>
<feature type="transmembrane region" description="Helical" evidence="1">
    <location>
        <begin position="193"/>
        <end position="213"/>
    </location>
</feature>
<feature type="transmembrane region" description="Helical" evidence="1">
    <location>
        <begin position="232"/>
        <end position="252"/>
    </location>
</feature>
<feature type="transmembrane region" description="Helical" evidence="1">
    <location>
        <begin position="259"/>
        <end position="279"/>
    </location>
</feature>
<accession>Q9HT14</accession>
<name>ATP6_PSEAE</name>
<proteinExistence type="inferred from homology"/>
<evidence type="ECO:0000255" key="1">
    <source>
        <dbReference type="HAMAP-Rule" id="MF_01393"/>
    </source>
</evidence>
<reference key="1">
    <citation type="journal article" date="2000" name="Nature">
        <title>Complete genome sequence of Pseudomonas aeruginosa PAO1, an opportunistic pathogen.</title>
        <authorList>
            <person name="Stover C.K."/>
            <person name="Pham X.-Q.T."/>
            <person name="Erwin A.L."/>
            <person name="Mizoguchi S.D."/>
            <person name="Warrener P."/>
            <person name="Hickey M.J."/>
            <person name="Brinkman F.S.L."/>
            <person name="Hufnagle W.O."/>
            <person name="Kowalik D.J."/>
            <person name="Lagrou M."/>
            <person name="Garber R.L."/>
            <person name="Goltry L."/>
            <person name="Tolentino E."/>
            <person name="Westbrock-Wadman S."/>
            <person name="Yuan Y."/>
            <person name="Brody L.L."/>
            <person name="Coulter S.N."/>
            <person name="Folger K.R."/>
            <person name="Kas A."/>
            <person name="Larbig K."/>
            <person name="Lim R.M."/>
            <person name="Smith K.A."/>
            <person name="Spencer D.H."/>
            <person name="Wong G.K.-S."/>
            <person name="Wu Z."/>
            <person name="Paulsen I.T."/>
            <person name="Reizer J."/>
            <person name="Saier M.H. Jr."/>
            <person name="Hancock R.E.W."/>
            <person name="Lory S."/>
            <person name="Olson M.V."/>
        </authorList>
    </citation>
    <scope>NUCLEOTIDE SEQUENCE [LARGE SCALE GENOMIC DNA]</scope>
    <source>
        <strain>ATCC 15692 / DSM 22644 / CIP 104116 / JCM 14847 / LMG 12228 / 1C / PRS 101 / PAO1</strain>
    </source>
</reference>
<organism>
    <name type="scientific">Pseudomonas aeruginosa (strain ATCC 15692 / DSM 22644 / CIP 104116 / JCM 14847 / LMG 12228 / 1C / PRS 101 / PAO1)</name>
    <dbReference type="NCBI Taxonomy" id="208964"/>
    <lineage>
        <taxon>Bacteria</taxon>
        <taxon>Pseudomonadati</taxon>
        <taxon>Pseudomonadota</taxon>
        <taxon>Gammaproteobacteria</taxon>
        <taxon>Pseudomonadales</taxon>
        <taxon>Pseudomonadaceae</taxon>
        <taxon>Pseudomonas</taxon>
    </lineage>
</organism>
<sequence length="289" mass="31921">MAAETASGYIQHHLQNLTFGRLPNGDWGFAHTAEQAKEMGFWAFHVDTLGWSVLLGVVFLFIFRLAAKKATSGQPGGLQNFVEVMVEFVDTSVKDTFHGRNPLIAPLALTVFVWIFLLNLIDLVPVDYLPMLAAKITGDEHLFFRAVATTDPNATLGLSISVFALIVFYSIKVKGIGGFLGELTLHPFSSKNIVVQILLIPVNFLLEFVTLIAKPVSLALRLFGNMYAGELIFILIAVMFGSGMFLLSALGVALNWAWAVFHILIITLQAFIFMMLTIVYLSMAHEDNH</sequence>
<dbReference type="EMBL" id="AE004091">
    <property type="protein sequence ID" value="AAG08945.1"/>
    <property type="molecule type" value="Genomic_DNA"/>
</dbReference>
<dbReference type="PIR" id="A82953">
    <property type="entry name" value="A82953"/>
</dbReference>
<dbReference type="RefSeq" id="NP_254247.1">
    <property type="nucleotide sequence ID" value="NC_002516.2"/>
</dbReference>
<dbReference type="RefSeq" id="WP_003100237.1">
    <property type="nucleotide sequence ID" value="NZ_QZGE01000012.1"/>
</dbReference>
<dbReference type="SMR" id="Q9HT14"/>
<dbReference type="FunCoup" id="Q9HT14">
    <property type="interactions" value="402"/>
</dbReference>
<dbReference type="STRING" id="208964.PA5560"/>
<dbReference type="PaxDb" id="208964-PA5560"/>
<dbReference type="DNASU" id="880089"/>
<dbReference type="GeneID" id="77224113"/>
<dbReference type="GeneID" id="880089"/>
<dbReference type="KEGG" id="pae:PA5560"/>
<dbReference type="PATRIC" id="fig|208964.12.peg.5826"/>
<dbReference type="PseudoCAP" id="PA5560"/>
<dbReference type="HOGENOM" id="CLU_041018_1_0_6"/>
<dbReference type="InParanoid" id="Q9HT14"/>
<dbReference type="OrthoDB" id="9789241at2"/>
<dbReference type="PhylomeDB" id="Q9HT14"/>
<dbReference type="BioCyc" id="PAER208964:G1FZ6-5687-MONOMER"/>
<dbReference type="Proteomes" id="UP000002438">
    <property type="component" value="Chromosome"/>
</dbReference>
<dbReference type="GO" id="GO:0005886">
    <property type="term" value="C:plasma membrane"/>
    <property type="evidence" value="ECO:0000318"/>
    <property type="project" value="GO_Central"/>
</dbReference>
<dbReference type="GO" id="GO:0045259">
    <property type="term" value="C:proton-transporting ATP synthase complex"/>
    <property type="evidence" value="ECO:0007669"/>
    <property type="project" value="UniProtKB-KW"/>
</dbReference>
<dbReference type="GO" id="GO:0046933">
    <property type="term" value="F:proton-transporting ATP synthase activity, rotational mechanism"/>
    <property type="evidence" value="ECO:0000318"/>
    <property type="project" value="GO_Central"/>
</dbReference>
<dbReference type="GO" id="GO:0042777">
    <property type="term" value="P:proton motive force-driven plasma membrane ATP synthesis"/>
    <property type="evidence" value="ECO:0000318"/>
    <property type="project" value="GO_Central"/>
</dbReference>
<dbReference type="CDD" id="cd00310">
    <property type="entry name" value="ATP-synt_Fo_a_6"/>
    <property type="match status" value="1"/>
</dbReference>
<dbReference type="FunFam" id="1.20.120.220:FF:000002">
    <property type="entry name" value="ATP synthase subunit a"/>
    <property type="match status" value="1"/>
</dbReference>
<dbReference type="Gene3D" id="1.20.120.220">
    <property type="entry name" value="ATP synthase, F0 complex, subunit A"/>
    <property type="match status" value="1"/>
</dbReference>
<dbReference type="HAMAP" id="MF_01393">
    <property type="entry name" value="ATP_synth_a_bact"/>
    <property type="match status" value="1"/>
</dbReference>
<dbReference type="InterPro" id="IPR045082">
    <property type="entry name" value="ATP_syn_F0_a_bact/chloroplast"/>
</dbReference>
<dbReference type="InterPro" id="IPR000568">
    <property type="entry name" value="ATP_synth_F0_asu"/>
</dbReference>
<dbReference type="InterPro" id="IPR023011">
    <property type="entry name" value="ATP_synth_F0_asu_AS"/>
</dbReference>
<dbReference type="InterPro" id="IPR035908">
    <property type="entry name" value="F0_ATP_A_sf"/>
</dbReference>
<dbReference type="NCBIfam" id="TIGR01131">
    <property type="entry name" value="ATP_synt_6_or_A"/>
    <property type="match status" value="1"/>
</dbReference>
<dbReference type="NCBIfam" id="NF004477">
    <property type="entry name" value="PRK05815.1-1"/>
    <property type="match status" value="1"/>
</dbReference>
<dbReference type="PANTHER" id="PTHR42823">
    <property type="entry name" value="ATP SYNTHASE SUBUNIT A, CHLOROPLASTIC"/>
    <property type="match status" value="1"/>
</dbReference>
<dbReference type="PANTHER" id="PTHR42823:SF3">
    <property type="entry name" value="ATP SYNTHASE SUBUNIT A, CHLOROPLASTIC"/>
    <property type="match status" value="1"/>
</dbReference>
<dbReference type="Pfam" id="PF00119">
    <property type="entry name" value="ATP-synt_A"/>
    <property type="match status" value="1"/>
</dbReference>
<dbReference type="SUPFAM" id="SSF81336">
    <property type="entry name" value="F1F0 ATP synthase subunit A"/>
    <property type="match status" value="1"/>
</dbReference>
<dbReference type="PROSITE" id="PS00449">
    <property type="entry name" value="ATPASE_A"/>
    <property type="match status" value="1"/>
</dbReference>
<keyword id="KW-0066">ATP synthesis</keyword>
<keyword id="KW-0997">Cell inner membrane</keyword>
<keyword id="KW-1003">Cell membrane</keyword>
<keyword id="KW-0138">CF(0)</keyword>
<keyword id="KW-0375">Hydrogen ion transport</keyword>
<keyword id="KW-0406">Ion transport</keyword>
<keyword id="KW-0472">Membrane</keyword>
<keyword id="KW-1185">Reference proteome</keyword>
<keyword id="KW-0812">Transmembrane</keyword>
<keyword id="KW-1133">Transmembrane helix</keyword>
<keyword id="KW-0813">Transport</keyword>
<gene>
    <name evidence="1" type="primary">atpB</name>
    <name type="ordered locus">PA5560</name>
</gene>
<comment type="function">
    <text evidence="1">Key component of the proton channel; it plays a direct role in the translocation of protons across the membrane.</text>
</comment>
<comment type="subunit">
    <text evidence="1">F-type ATPases have 2 components, CF(1) - the catalytic core - and CF(0) - the membrane proton channel. CF(1) has five subunits: alpha(3), beta(3), gamma(1), delta(1), epsilon(1). CF(0) has three main subunits: a(1), b(2) and c(9-12). The alpha and beta chains form an alternating ring which encloses part of the gamma chain. CF(1) is attached to CF(0) by a central stalk formed by the gamma and epsilon chains, while a peripheral stalk is formed by the delta and b chains.</text>
</comment>
<comment type="subcellular location">
    <subcellularLocation>
        <location evidence="1">Cell inner membrane</location>
        <topology evidence="1">Multi-pass membrane protein</topology>
    </subcellularLocation>
</comment>
<comment type="similarity">
    <text evidence="1">Belongs to the ATPase A chain family.</text>
</comment>
<protein>
    <recommendedName>
        <fullName evidence="1">ATP synthase subunit a</fullName>
    </recommendedName>
    <alternativeName>
        <fullName evidence="1">ATP synthase F0 sector subunit a</fullName>
    </alternativeName>
    <alternativeName>
        <fullName evidence="1">F-ATPase subunit 6</fullName>
    </alternativeName>
</protein>